<keyword id="KW-0687">Ribonucleoprotein</keyword>
<keyword id="KW-0689">Ribosomal protein</keyword>
<keyword id="KW-0694">RNA-binding</keyword>
<keyword id="KW-0699">rRNA-binding</keyword>
<evidence type="ECO:0000255" key="1">
    <source>
        <dbReference type="HAMAP-Rule" id="MF_01310"/>
    </source>
</evidence>
<evidence type="ECO:0000305" key="2"/>
<proteinExistence type="inferred from homology"/>
<reference key="1">
    <citation type="journal article" date="2007" name="J. Bacteriol.">
        <title>The complete genome sequence of Campylobacter jejuni strain 81116 (NCTC11828).</title>
        <authorList>
            <person name="Pearson B.M."/>
            <person name="Gaskin D.J.H."/>
            <person name="Segers R.P.A.M."/>
            <person name="Wells J.M."/>
            <person name="Nuijten P.J.M."/>
            <person name="van Vliet A.H.M."/>
        </authorList>
    </citation>
    <scope>NUCLEOTIDE SEQUENCE [LARGE SCALE GENOMIC DNA]</scope>
    <source>
        <strain>81116 / NCTC 11828</strain>
    </source>
</reference>
<comment type="function">
    <text evidence="1">Located on the platform of the 30S subunit, it bridges several disparate RNA helices of the 16S rRNA. Forms part of the Shine-Dalgarno cleft in the 70S ribosome.</text>
</comment>
<comment type="subunit">
    <text evidence="1">Part of the 30S ribosomal subunit. Interacts with proteins S7 and S18. Binds to IF-3.</text>
</comment>
<comment type="similarity">
    <text evidence="1">Belongs to the universal ribosomal protein uS11 family.</text>
</comment>
<feature type="chain" id="PRO_1000073202" description="Small ribosomal subunit protein uS11">
    <location>
        <begin position="1"/>
        <end position="130"/>
    </location>
</feature>
<gene>
    <name evidence="1" type="primary">rpsK</name>
    <name type="ordered locus">C8J_1495</name>
</gene>
<dbReference type="EMBL" id="CP000814">
    <property type="protein sequence ID" value="ABV53092.1"/>
    <property type="molecule type" value="Genomic_DNA"/>
</dbReference>
<dbReference type="RefSeq" id="WP_002779544.1">
    <property type="nucleotide sequence ID" value="NC_009839.1"/>
</dbReference>
<dbReference type="SMR" id="A8FNQ5"/>
<dbReference type="GeneID" id="98394728"/>
<dbReference type="KEGG" id="cju:C8J_1495"/>
<dbReference type="HOGENOM" id="CLU_072439_5_0_7"/>
<dbReference type="GO" id="GO:1990904">
    <property type="term" value="C:ribonucleoprotein complex"/>
    <property type="evidence" value="ECO:0007669"/>
    <property type="project" value="UniProtKB-KW"/>
</dbReference>
<dbReference type="GO" id="GO:0005840">
    <property type="term" value="C:ribosome"/>
    <property type="evidence" value="ECO:0007669"/>
    <property type="project" value="UniProtKB-KW"/>
</dbReference>
<dbReference type="GO" id="GO:0019843">
    <property type="term" value="F:rRNA binding"/>
    <property type="evidence" value="ECO:0007669"/>
    <property type="project" value="UniProtKB-UniRule"/>
</dbReference>
<dbReference type="GO" id="GO:0003735">
    <property type="term" value="F:structural constituent of ribosome"/>
    <property type="evidence" value="ECO:0007669"/>
    <property type="project" value="InterPro"/>
</dbReference>
<dbReference type="GO" id="GO:0006412">
    <property type="term" value="P:translation"/>
    <property type="evidence" value="ECO:0007669"/>
    <property type="project" value="UniProtKB-UniRule"/>
</dbReference>
<dbReference type="FunFam" id="3.30.420.80:FF:000001">
    <property type="entry name" value="30S ribosomal protein S11"/>
    <property type="match status" value="1"/>
</dbReference>
<dbReference type="Gene3D" id="3.30.420.80">
    <property type="entry name" value="Ribosomal protein S11"/>
    <property type="match status" value="1"/>
</dbReference>
<dbReference type="HAMAP" id="MF_01310">
    <property type="entry name" value="Ribosomal_uS11"/>
    <property type="match status" value="1"/>
</dbReference>
<dbReference type="InterPro" id="IPR001971">
    <property type="entry name" value="Ribosomal_uS11"/>
</dbReference>
<dbReference type="InterPro" id="IPR019981">
    <property type="entry name" value="Ribosomal_uS11_bac-type"/>
</dbReference>
<dbReference type="InterPro" id="IPR018102">
    <property type="entry name" value="Ribosomal_uS11_CS"/>
</dbReference>
<dbReference type="InterPro" id="IPR036967">
    <property type="entry name" value="Ribosomal_uS11_sf"/>
</dbReference>
<dbReference type="NCBIfam" id="NF003698">
    <property type="entry name" value="PRK05309.1"/>
    <property type="match status" value="1"/>
</dbReference>
<dbReference type="NCBIfam" id="TIGR03632">
    <property type="entry name" value="uS11_bact"/>
    <property type="match status" value="1"/>
</dbReference>
<dbReference type="PANTHER" id="PTHR11759">
    <property type="entry name" value="40S RIBOSOMAL PROTEIN S14/30S RIBOSOMAL PROTEIN S11"/>
    <property type="match status" value="1"/>
</dbReference>
<dbReference type="Pfam" id="PF00411">
    <property type="entry name" value="Ribosomal_S11"/>
    <property type="match status" value="1"/>
</dbReference>
<dbReference type="PIRSF" id="PIRSF002131">
    <property type="entry name" value="Ribosomal_S11"/>
    <property type="match status" value="1"/>
</dbReference>
<dbReference type="SUPFAM" id="SSF53137">
    <property type="entry name" value="Translational machinery components"/>
    <property type="match status" value="1"/>
</dbReference>
<dbReference type="PROSITE" id="PS00054">
    <property type="entry name" value="RIBOSOMAL_S11"/>
    <property type="match status" value="1"/>
</dbReference>
<name>RS11_CAMJ8</name>
<sequence>MAKRKIVKKKVVKKNIAKGIVYISATFNNTMVTVTDEMGNAIAWSSAGGLGFKGSKKSTPYAAQQAVEDALNKAKEHGIKEVGIKVQGPGSGRETAVKSVGAMEGIKVTFLKDITPLAHNGCRPPKRRRV</sequence>
<organism>
    <name type="scientific">Campylobacter jejuni subsp. jejuni serotype O:6 (strain 81116 / NCTC 11828)</name>
    <dbReference type="NCBI Taxonomy" id="407148"/>
    <lineage>
        <taxon>Bacteria</taxon>
        <taxon>Pseudomonadati</taxon>
        <taxon>Campylobacterota</taxon>
        <taxon>Epsilonproteobacteria</taxon>
        <taxon>Campylobacterales</taxon>
        <taxon>Campylobacteraceae</taxon>
        <taxon>Campylobacter</taxon>
    </lineage>
</organism>
<protein>
    <recommendedName>
        <fullName evidence="1">Small ribosomal subunit protein uS11</fullName>
    </recommendedName>
    <alternativeName>
        <fullName evidence="2">30S ribosomal protein S11</fullName>
    </alternativeName>
</protein>
<accession>A8FNQ5</accession>